<keyword id="KW-0227">DNA damage</keyword>
<keyword id="KW-0233">DNA recombination</keyword>
<keyword id="KW-0234">DNA repair</keyword>
<keyword id="KW-1185">Reference proteome</keyword>
<sequence length="254" mass="27322">MEWEAPALVLSASPYGESSAIVHLLTEDLGLVHGLARGGTARANRALWQPGNLIRASWRGRLPDQLGNLSGELVHGSAARLMSAPLALAMLASACAVADGTLPEREPHPRIFHLLTRFFSLLSLDPDMAGWGGMAALLRWEACLLGDLGYGMDLSACAVTGGSAELAWVSPRTGRAVSDAAAGEWRPRLLRLPPLFLDESDPGTVQDWRDGLRLTGHFLARDAFGQRHRPLPPARLRLVDMIDALQPGALHPDD</sequence>
<protein>
    <recommendedName>
        <fullName evidence="1">DNA repair protein RecO</fullName>
    </recommendedName>
    <alternativeName>
        <fullName evidence="1">Recombination protein O</fullName>
    </alternativeName>
</protein>
<reference key="1">
    <citation type="journal article" date="2009" name="BMC Genomics">
        <title>Complete genome sequence of the sugarcane nitrogen-fixing endophyte Gluconacetobacter diazotrophicus Pal5.</title>
        <authorList>
            <person name="Bertalan M."/>
            <person name="Albano R."/>
            <person name="de Padua V."/>
            <person name="Rouws L."/>
            <person name="Rojas C."/>
            <person name="Hemerly A."/>
            <person name="Teixeira K."/>
            <person name="Schwab S."/>
            <person name="Araujo J."/>
            <person name="Oliveira A."/>
            <person name="Franca L."/>
            <person name="Magalhaes V."/>
            <person name="Alqueres S."/>
            <person name="Cardoso A."/>
            <person name="Almeida W."/>
            <person name="Loureiro M.M."/>
            <person name="Nogueira E."/>
            <person name="Cidade D."/>
            <person name="Oliveira D."/>
            <person name="Simao T."/>
            <person name="Macedo J."/>
            <person name="Valadao A."/>
            <person name="Dreschsel M."/>
            <person name="Freitas F."/>
            <person name="Vidal M."/>
            <person name="Guedes H."/>
            <person name="Rodrigues E."/>
            <person name="Meneses C."/>
            <person name="Brioso P."/>
            <person name="Pozzer L."/>
            <person name="Figueiredo D."/>
            <person name="Montano H."/>
            <person name="Junior J."/>
            <person name="de Souza Filho G."/>
            <person name="Martin Quintana Flores V."/>
            <person name="Ferreira B."/>
            <person name="Branco A."/>
            <person name="Gonzalez P."/>
            <person name="Guillobel H."/>
            <person name="Lemos M."/>
            <person name="Seibel L."/>
            <person name="Macedo J."/>
            <person name="Alves-Ferreira M."/>
            <person name="Sachetto-Martins G."/>
            <person name="Coelho A."/>
            <person name="Santos E."/>
            <person name="Amaral G."/>
            <person name="Neves A."/>
            <person name="Pacheco A.B."/>
            <person name="Carvalho D."/>
            <person name="Lery L."/>
            <person name="Bisch P."/>
            <person name="Rossle S.C."/>
            <person name="Urmenyi T."/>
            <person name="Rael Pereira A."/>
            <person name="Silva R."/>
            <person name="Rondinelli E."/>
            <person name="von Kruger W."/>
            <person name="Martins O."/>
            <person name="Baldani J.I."/>
            <person name="Ferreira P.C."/>
        </authorList>
    </citation>
    <scope>NUCLEOTIDE SEQUENCE [LARGE SCALE GENOMIC DNA]</scope>
    <source>
        <strain>ATCC 49037 / DSM 5601 / CCUG 37298 / CIP 103539 / LMG 7603 / PAl5</strain>
    </source>
</reference>
<reference key="2">
    <citation type="journal article" date="2010" name="Stand. Genomic Sci.">
        <title>Two genome sequences of the same bacterial strain, Gluconacetobacter diazotrophicus PAl 5, suggest a new standard in genome sequence submission.</title>
        <authorList>
            <person name="Giongo A."/>
            <person name="Tyler H.L."/>
            <person name="Zipperer U.N."/>
            <person name="Triplett E.W."/>
        </authorList>
    </citation>
    <scope>NUCLEOTIDE SEQUENCE [LARGE SCALE GENOMIC DNA]</scope>
    <source>
        <strain>ATCC 49037 / DSM 5601 / CCUG 37298 / CIP 103539 / LMG 7603 / PAl5</strain>
    </source>
</reference>
<comment type="function">
    <text evidence="1">Involved in DNA repair and RecF pathway recombination.</text>
</comment>
<comment type="similarity">
    <text evidence="1">Belongs to the RecO family.</text>
</comment>
<name>RECO_GLUDA</name>
<gene>
    <name evidence="1" type="primary">recO</name>
    <name type="ordered locus">GDI3017</name>
    <name type="ordered locus">Gdia_3349</name>
</gene>
<accession>A9HRQ4</accession>
<accession>B5ZLD4</accession>
<evidence type="ECO:0000255" key="1">
    <source>
        <dbReference type="HAMAP-Rule" id="MF_00201"/>
    </source>
</evidence>
<evidence type="ECO:0000305" key="2"/>
<dbReference type="EMBL" id="AM889285">
    <property type="protein sequence ID" value="CAP56960.1"/>
    <property type="molecule type" value="Genomic_DNA"/>
</dbReference>
<dbReference type="EMBL" id="CP001189">
    <property type="protein sequence ID" value="ACI53076.1"/>
    <property type="molecule type" value="Genomic_DNA"/>
</dbReference>
<dbReference type="RefSeq" id="WP_012227289.1">
    <property type="nucleotide sequence ID" value="NC_010125.1"/>
</dbReference>
<dbReference type="RefSeq" id="WP_012554895.1">
    <property type="nucleotide sequence ID" value="NC_011365.1"/>
</dbReference>
<dbReference type="SMR" id="A9HRQ4"/>
<dbReference type="STRING" id="272568.GDI3017"/>
<dbReference type="KEGG" id="gdi:GDI3017"/>
<dbReference type="KEGG" id="gdj:Gdia_3349"/>
<dbReference type="eggNOG" id="COG1381">
    <property type="taxonomic scope" value="Bacteria"/>
</dbReference>
<dbReference type="HOGENOM" id="CLU_086029_0_0_5"/>
<dbReference type="OrthoDB" id="9804792at2"/>
<dbReference type="Proteomes" id="UP000001176">
    <property type="component" value="Chromosome"/>
</dbReference>
<dbReference type="GO" id="GO:0043590">
    <property type="term" value="C:bacterial nucleoid"/>
    <property type="evidence" value="ECO:0007669"/>
    <property type="project" value="TreeGrafter"/>
</dbReference>
<dbReference type="GO" id="GO:0006310">
    <property type="term" value="P:DNA recombination"/>
    <property type="evidence" value="ECO:0007669"/>
    <property type="project" value="UniProtKB-UniRule"/>
</dbReference>
<dbReference type="GO" id="GO:0006302">
    <property type="term" value="P:double-strand break repair"/>
    <property type="evidence" value="ECO:0007669"/>
    <property type="project" value="TreeGrafter"/>
</dbReference>
<dbReference type="Gene3D" id="2.40.50.140">
    <property type="entry name" value="Nucleic acid-binding proteins"/>
    <property type="match status" value="1"/>
</dbReference>
<dbReference type="Gene3D" id="1.20.1440.120">
    <property type="entry name" value="Recombination protein O, C-terminal domain"/>
    <property type="match status" value="1"/>
</dbReference>
<dbReference type="HAMAP" id="MF_00201">
    <property type="entry name" value="RecO"/>
    <property type="match status" value="1"/>
</dbReference>
<dbReference type="InterPro" id="IPR037278">
    <property type="entry name" value="ARFGAP/RecO"/>
</dbReference>
<dbReference type="InterPro" id="IPR022572">
    <property type="entry name" value="DNA_rep/recomb_RecO_N"/>
</dbReference>
<dbReference type="InterPro" id="IPR012340">
    <property type="entry name" value="NA-bd_OB-fold"/>
</dbReference>
<dbReference type="InterPro" id="IPR003717">
    <property type="entry name" value="RecO"/>
</dbReference>
<dbReference type="InterPro" id="IPR042242">
    <property type="entry name" value="RecO_C"/>
</dbReference>
<dbReference type="NCBIfam" id="TIGR00613">
    <property type="entry name" value="reco"/>
    <property type="match status" value="1"/>
</dbReference>
<dbReference type="PANTHER" id="PTHR33991">
    <property type="entry name" value="DNA REPAIR PROTEIN RECO"/>
    <property type="match status" value="1"/>
</dbReference>
<dbReference type="PANTHER" id="PTHR33991:SF1">
    <property type="entry name" value="DNA REPAIR PROTEIN RECO"/>
    <property type="match status" value="1"/>
</dbReference>
<dbReference type="Pfam" id="PF02565">
    <property type="entry name" value="RecO_C"/>
    <property type="match status" value="1"/>
</dbReference>
<dbReference type="Pfam" id="PF11967">
    <property type="entry name" value="RecO_N"/>
    <property type="match status" value="1"/>
</dbReference>
<dbReference type="SUPFAM" id="SSF57863">
    <property type="entry name" value="ArfGap/RecO-like zinc finger"/>
    <property type="match status" value="1"/>
</dbReference>
<dbReference type="SUPFAM" id="SSF50249">
    <property type="entry name" value="Nucleic acid-binding proteins"/>
    <property type="match status" value="1"/>
</dbReference>
<proteinExistence type="inferred from homology"/>
<feature type="chain" id="PRO_1000077732" description="DNA repair protein RecO">
    <location>
        <begin position="1"/>
        <end position="254"/>
    </location>
</feature>
<feature type="sequence conflict" description="In Ref. 2; ACI53076." evidence="2" ref="2">
    <original>D</original>
    <variation>N</variation>
    <location>
        <position position="198"/>
    </location>
</feature>
<organism>
    <name type="scientific">Gluconacetobacter diazotrophicus (strain ATCC 49037 / DSM 5601 / CCUG 37298 / CIP 103539 / LMG 7603 / PAl5)</name>
    <dbReference type="NCBI Taxonomy" id="272568"/>
    <lineage>
        <taxon>Bacteria</taxon>
        <taxon>Pseudomonadati</taxon>
        <taxon>Pseudomonadota</taxon>
        <taxon>Alphaproteobacteria</taxon>
        <taxon>Acetobacterales</taxon>
        <taxon>Acetobacteraceae</taxon>
        <taxon>Gluconacetobacter</taxon>
    </lineage>
</organism>